<feature type="chain" id="PRO_0000223611" description="Interferon-inducible double-stranded RNA-dependent protein kinase activator A">
    <location>
        <begin position="1"/>
        <end position="313"/>
    </location>
</feature>
<feature type="domain" description="DRBM 1" evidence="3">
    <location>
        <begin position="34"/>
        <end position="101"/>
    </location>
</feature>
<feature type="domain" description="DRBM 2" evidence="3">
    <location>
        <begin position="126"/>
        <end position="194"/>
    </location>
</feature>
<feature type="domain" description="DRBM 3" evidence="3">
    <location>
        <begin position="240"/>
        <end position="308"/>
    </location>
</feature>
<feature type="region of interest" description="Sufficient for self-association and interaction with TARBP2" evidence="1">
    <location>
        <begin position="1"/>
        <end position="103"/>
    </location>
</feature>
<feature type="region of interest" description="Disordered" evidence="4">
    <location>
        <begin position="1"/>
        <end position="20"/>
    </location>
</feature>
<feature type="region of interest" description="Sufficient for self-association and interaction with TARBP2" evidence="1">
    <location>
        <begin position="102"/>
        <end position="195"/>
    </location>
</feature>
<feature type="region of interest" description="Sufficient for self-association and interaction with TARBP2" evidence="1">
    <location>
        <begin position="195"/>
        <end position="313"/>
    </location>
</feature>
<feature type="modified residue" description="Phosphoserine" evidence="6">
    <location>
        <position position="18"/>
    </location>
</feature>
<feature type="modified residue" description="Phosphoserine" evidence="6">
    <location>
        <position position="167"/>
    </location>
</feature>
<feature type="modified residue" description="Phosphoserine" evidence="2">
    <location>
        <position position="246"/>
    </location>
</feature>
<feature type="modified residue" description="Phosphoserine" evidence="2">
    <location>
        <position position="287"/>
    </location>
</feature>
<proteinExistence type="evidence at protein level"/>
<comment type="function">
    <text evidence="1">Activates EIF2AK2/PKR in the absence of double-stranded RNA (dsRNA), leading to phosphorylation of EIF2S1/EFI2-alpha and inhibition of translation and induction of apoptosis. Required for siRNA production by DICER1 and for subsequent siRNA-mediated post-transcriptional gene silencing. Does not seem to be required for processing of pre-miRNA to miRNA by DICER1. Promotes UBC9-p53/TP53 association, sumoylation and phosphorylation of p53/TP53 at 'Lys-386' at 'Ser-392' respectively and enhances its activity in a EIF2AK2/PKR-dependent manner (By similarity).</text>
</comment>
<comment type="subunit">
    <text evidence="1">Homodimer. Interacts with EIF2AK2/PKR through its DRBM domains. Interacts with DICER1, AGO2 and TARBP2. Also able to interact with dsRNA (By similarity). Interacts with UBC9 (By similarity). Forms a complex with UBC9 and p53/TP53 (By similarity). Interacts with DUS2L (via DRBM domain) (By similarity).</text>
</comment>
<comment type="subcellular location">
    <subcellularLocation>
        <location evidence="1">Cytoplasm</location>
        <location evidence="1">Perinuclear region</location>
    </subcellularLocation>
    <subcellularLocation>
        <location evidence="1">Cytoplasm</location>
    </subcellularLocation>
</comment>
<comment type="domain">
    <text evidence="1">Self-association may occur via interactions between DRBM domains as follows: DRBM 1/DRBM 1, DRBM 1/DRBM 2, DRBM 2/DRBM 2 or DRBM 3/DRBM3.</text>
</comment>
<comment type="PTM">
    <text evidence="1">Phosphorylated at Ser-246 in unstressed cells and at Ser-287 in stressed cells. Phosphorylation at Ser-246 appears to be a prerequisite for subsequent phosphorylation at Ser-287. Phosphorylation at Ser-246 and Ser-287 are necessary for activation of EIF2AK2/PKR under conditions of stress (By similarity).</text>
</comment>
<comment type="similarity">
    <text evidence="5">Belongs to the PRKRA family.</text>
</comment>
<name>PRKRA_RAT</name>
<dbReference type="EMBL" id="BC097446">
    <property type="protein sequence ID" value="AAH97446.1"/>
    <property type="molecule type" value="mRNA"/>
</dbReference>
<dbReference type="RefSeq" id="NP_001019951.1">
    <property type="nucleotide sequence ID" value="NM_001024780.1"/>
</dbReference>
<dbReference type="SMR" id="Q4V8C7"/>
<dbReference type="FunCoup" id="Q4V8C7">
    <property type="interactions" value="1498"/>
</dbReference>
<dbReference type="STRING" id="10116.ENSRNOP00000015624"/>
<dbReference type="GlyGen" id="Q4V8C7">
    <property type="glycosylation" value="1 site"/>
</dbReference>
<dbReference type="iPTMnet" id="Q4V8C7"/>
<dbReference type="PhosphoSitePlus" id="Q4V8C7"/>
<dbReference type="jPOST" id="Q4V8C7"/>
<dbReference type="PaxDb" id="10116-ENSRNOP00000015624"/>
<dbReference type="GeneID" id="311130"/>
<dbReference type="KEGG" id="rno:311130"/>
<dbReference type="UCSC" id="RGD:1306707">
    <property type="organism name" value="rat"/>
</dbReference>
<dbReference type="AGR" id="RGD:1306707"/>
<dbReference type="CTD" id="8575"/>
<dbReference type="RGD" id="1306707">
    <property type="gene designation" value="Prkra"/>
</dbReference>
<dbReference type="eggNOG" id="KOG3732">
    <property type="taxonomic scope" value="Eukaryota"/>
</dbReference>
<dbReference type="InParanoid" id="Q4V8C7"/>
<dbReference type="OrthoDB" id="5430at9989"/>
<dbReference type="PhylomeDB" id="Q4V8C7"/>
<dbReference type="Reactome" id="R-RNO-203927">
    <property type="pathway name" value="MicroRNA (miRNA) biogenesis"/>
</dbReference>
<dbReference type="Reactome" id="R-RNO-426486">
    <property type="pathway name" value="Small interfering RNA (siRNA) biogenesis"/>
</dbReference>
<dbReference type="Reactome" id="R-RNO-9833482">
    <property type="pathway name" value="PKR-mediated signaling"/>
</dbReference>
<dbReference type="PRO" id="PR:Q4V8C7"/>
<dbReference type="Proteomes" id="UP000002494">
    <property type="component" value="Unplaced"/>
</dbReference>
<dbReference type="GO" id="GO:0005737">
    <property type="term" value="C:cytoplasm"/>
    <property type="evidence" value="ECO:0000250"/>
    <property type="project" value="UniProtKB"/>
</dbReference>
<dbReference type="GO" id="GO:0005634">
    <property type="term" value="C:nucleus"/>
    <property type="evidence" value="ECO:0000318"/>
    <property type="project" value="GO_Central"/>
</dbReference>
<dbReference type="GO" id="GO:0048471">
    <property type="term" value="C:perinuclear region of cytoplasm"/>
    <property type="evidence" value="ECO:0007669"/>
    <property type="project" value="UniProtKB-SubCell"/>
</dbReference>
<dbReference type="GO" id="GO:0016442">
    <property type="term" value="C:RISC complex"/>
    <property type="evidence" value="ECO:0000318"/>
    <property type="project" value="GO_Central"/>
</dbReference>
<dbReference type="GO" id="GO:0070578">
    <property type="term" value="C:RISC-loading complex"/>
    <property type="evidence" value="ECO:0000266"/>
    <property type="project" value="RGD"/>
</dbReference>
<dbReference type="GO" id="GO:0003725">
    <property type="term" value="F:double-stranded RNA binding"/>
    <property type="evidence" value="ECO:0000266"/>
    <property type="project" value="RGD"/>
</dbReference>
<dbReference type="GO" id="GO:0019899">
    <property type="term" value="F:enzyme binding"/>
    <property type="evidence" value="ECO:0000266"/>
    <property type="project" value="RGD"/>
</dbReference>
<dbReference type="GO" id="GO:0042802">
    <property type="term" value="F:identical protein binding"/>
    <property type="evidence" value="ECO:0000266"/>
    <property type="project" value="RGD"/>
</dbReference>
<dbReference type="GO" id="GO:0070883">
    <property type="term" value="F:pre-miRNA binding"/>
    <property type="evidence" value="ECO:0000266"/>
    <property type="project" value="RGD"/>
</dbReference>
<dbReference type="GO" id="GO:0042803">
    <property type="term" value="F:protein homodimerization activity"/>
    <property type="evidence" value="ECO:0000266"/>
    <property type="project" value="RGD"/>
</dbReference>
<dbReference type="GO" id="GO:0030295">
    <property type="term" value="F:protein kinase activator activity"/>
    <property type="evidence" value="ECO:0000266"/>
    <property type="project" value="RGD"/>
</dbReference>
<dbReference type="GO" id="GO:0019901">
    <property type="term" value="F:protein kinase binding"/>
    <property type="evidence" value="ECO:0000353"/>
    <property type="project" value="RGD"/>
</dbReference>
<dbReference type="GO" id="GO:0035197">
    <property type="term" value="F:siRNA binding"/>
    <property type="evidence" value="ECO:0000318"/>
    <property type="project" value="GO_Central"/>
</dbReference>
<dbReference type="GO" id="GO:0140374">
    <property type="term" value="P:antiviral innate immune response"/>
    <property type="evidence" value="ECO:0000266"/>
    <property type="project" value="RGD"/>
</dbReference>
<dbReference type="GO" id="GO:0034599">
    <property type="term" value="P:cellular response to oxidative stress"/>
    <property type="evidence" value="ECO:0000266"/>
    <property type="project" value="RGD"/>
</dbReference>
<dbReference type="GO" id="GO:0043583">
    <property type="term" value="P:ear development"/>
    <property type="evidence" value="ECO:0000266"/>
    <property type="project" value="RGD"/>
</dbReference>
<dbReference type="GO" id="GO:0042474">
    <property type="term" value="P:middle ear morphogenesis"/>
    <property type="evidence" value="ECO:0000266"/>
    <property type="project" value="RGD"/>
</dbReference>
<dbReference type="GO" id="GO:0035196">
    <property type="term" value="P:miRNA processing"/>
    <property type="evidence" value="ECO:0000266"/>
    <property type="project" value="RGD"/>
</dbReference>
<dbReference type="GO" id="GO:0042473">
    <property type="term" value="P:outer ear morphogenesis"/>
    <property type="evidence" value="ECO:0000266"/>
    <property type="project" value="RGD"/>
</dbReference>
<dbReference type="GO" id="GO:0008284">
    <property type="term" value="P:positive regulation of cell population proliferation"/>
    <property type="evidence" value="ECO:0000315"/>
    <property type="project" value="RGD"/>
</dbReference>
<dbReference type="GO" id="GO:2001244">
    <property type="term" value="P:positive regulation of intrinsic apoptotic signaling pathway"/>
    <property type="evidence" value="ECO:0000266"/>
    <property type="project" value="RGD"/>
</dbReference>
<dbReference type="GO" id="GO:0031054">
    <property type="term" value="P:pre-miRNA processing"/>
    <property type="evidence" value="ECO:0000266"/>
    <property type="project" value="RGD"/>
</dbReference>
<dbReference type="GO" id="GO:0050821">
    <property type="term" value="P:protein stabilization"/>
    <property type="evidence" value="ECO:0000266"/>
    <property type="project" value="RGD"/>
</dbReference>
<dbReference type="GO" id="GO:0070920">
    <property type="term" value="P:regulation of regulatory ncRNA processing"/>
    <property type="evidence" value="ECO:0000318"/>
    <property type="project" value="GO_Central"/>
</dbReference>
<dbReference type="GO" id="GO:0070922">
    <property type="term" value="P:RISC complex assembly"/>
    <property type="evidence" value="ECO:0000266"/>
    <property type="project" value="RGD"/>
</dbReference>
<dbReference type="GO" id="GO:0030422">
    <property type="term" value="P:siRNA processing"/>
    <property type="evidence" value="ECO:0000250"/>
    <property type="project" value="UniProtKB"/>
</dbReference>
<dbReference type="GO" id="GO:0048705">
    <property type="term" value="P:skeletal system morphogenesis"/>
    <property type="evidence" value="ECO:0000266"/>
    <property type="project" value="RGD"/>
</dbReference>
<dbReference type="CDD" id="cd19889">
    <property type="entry name" value="DSRM_PRKRA_rpt1"/>
    <property type="match status" value="1"/>
</dbReference>
<dbReference type="CDD" id="cd19891">
    <property type="entry name" value="DSRM_PRKRA_rpt2"/>
    <property type="match status" value="1"/>
</dbReference>
<dbReference type="CDD" id="cd19892">
    <property type="entry name" value="DSRM_PRKRA_rpt3"/>
    <property type="match status" value="1"/>
</dbReference>
<dbReference type="FunFam" id="3.30.160.20:FF:000005">
    <property type="entry name" value="Putative double-stranded RNA-specific adenosine deaminase"/>
    <property type="match status" value="1"/>
</dbReference>
<dbReference type="FunFam" id="3.30.160.20:FF:000019">
    <property type="entry name" value="RISC-loading complex subunit TARBP2"/>
    <property type="match status" value="1"/>
</dbReference>
<dbReference type="FunFam" id="3.30.160.20:FF:000018">
    <property type="entry name" value="RISC-loading complex subunit TARBP2 isoform X3"/>
    <property type="match status" value="1"/>
</dbReference>
<dbReference type="Gene3D" id="3.30.160.20">
    <property type="match status" value="3"/>
</dbReference>
<dbReference type="InterPro" id="IPR014720">
    <property type="entry name" value="dsRBD_dom"/>
</dbReference>
<dbReference type="InterPro" id="IPR044465">
    <property type="entry name" value="PRKRA_DSRM_1"/>
</dbReference>
<dbReference type="InterPro" id="IPR044466">
    <property type="entry name" value="PRKRA_DSRM_2"/>
</dbReference>
<dbReference type="InterPro" id="IPR044467">
    <property type="entry name" value="PRKRA_DSRM_3"/>
</dbReference>
<dbReference type="InterPro" id="IPR051247">
    <property type="entry name" value="RLC_Component"/>
</dbReference>
<dbReference type="PANTHER" id="PTHR46205:SF2">
    <property type="entry name" value="INTERFERON-INDUCIBLE DOUBLE-STRANDED RNA-DEPENDENT PROTEIN KINASE ACTIVATOR A"/>
    <property type="match status" value="1"/>
</dbReference>
<dbReference type="PANTHER" id="PTHR46205">
    <property type="entry name" value="LOQUACIOUS, ISOFORM B"/>
    <property type="match status" value="1"/>
</dbReference>
<dbReference type="Pfam" id="PF00035">
    <property type="entry name" value="dsrm"/>
    <property type="match status" value="2"/>
</dbReference>
<dbReference type="SMART" id="SM00358">
    <property type="entry name" value="DSRM"/>
    <property type="match status" value="3"/>
</dbReference>
<dbReference type="SUPFAM" id="SSF54768">
    <property type="entry name" value="dsRNA-binding domain-like"/>
    <property type="match status" value="3"/>
</dbReference>
<dbReference type="PROSITE" id="PS50137">
    <property type="entry name" value="DS_RBD"/>
    <property type="match status" value="3"/>
</dbReference>
<sequence length="313" mass="34355">MSHSRHRAEAPPLQREDSGTFSLGKMITAKPGKTPIQVLHEYGTKTKNIPVYECERSDVQVHVPTFTFRVTVGDITCTGEGTSKKLAKHRAAEAAINILKANASICFAVPDPLMPDPSKQPKNQLNPIGSLQELAIHHGWRLPEYTLSQEGGPAHKREYTTICRLESFMETGKGASKKQAKRNAAEKFLAKFSNISPENHISLTNVVGHSLGCTWHSLRNSPGEKINLLKRSLLSLPNTDYIQLLSEIAKEQGFSITYLDIEELSANGQYQCLAELSTSPITVCHGSGISCGNAQSDAAHNALQYLKIIAERK</sequence>
<keyword id="KW-0963">Cytoplasm</keyword>
<keyword id="KW-0597">Phosphoprotein</keyword>
<keyword id="KW-1185">Reference proteome</keyword>
<keyword id="KW-0677">Repeat</keyword>
<keyword id="KW-0694">RNA-binding</keyword>
<keyword id="KW-0943">RNA-mediated gene silencing</keyword>
<accession>Q4V8C7</accession>
<organism>
    <name type="scientific">Rattus norvegicus</name>
    <name type="common">Rat</name>
    <dbReference type="NCBI Taxonomy" id="10116"/>
    <lineage>
        <taxon>Eukaryota</taxon>
        <taxon>Metazoa</taxon>
        <taxon>Chordata</taxon>
        <taxon>Craniata</taxon>
        <taxon>Vertebrata</taxon>
        <taxon>Euteleostomi</taxon>
        <taxon>Mammalia</taxon>
        <taxon>Eutheria</taxon>
        <taxon>Euarchontoglires</taxon>
        <taxon>Glires</taxon>
        <taxon>Rodentia</taxon>
        <taxon>Myomorpha</taxon>
        <taxon>Muroidea</taxon>
        <taxon>Muridae</taxon>
        <taxon>Murinae</taxon>
        <taxon>Rattus</taxon>
    </lineage>
</organism>
<gene>
    <name type="primary">Prkra</name>
</gene>
<protein>
    <recommendedName>
        <fullName>Interferon-inducible double-stranded RNA-dependent protein kinase activator A</fullName>
    </recommendedName>
    <alternativeName>
        <fullName>Protein activator of the interferon-induced protein kinase</fullName>
    </alternativeName>
    <alternativeName>
        <fullName>Protein kinase, interferon-inducible double-stranded RNA-dependent activator</fullName>
    </alternativeName>
</protein>
<reference key="1">
    <citation type="journal article" date="2004" name="Genome Res.">
        <title>The status, quality, and expansion of the NIH full-length cDNA project: the Mammalian Gene Collection (MGC).</title>
        <authorList>
            <consortium name="The MGC Project Team"/>
        </authorList>
    </citation>
    <scope>NUCLEOTIDE SEQUENCE [LARGE SCALE MRNA]</scope>
    <source>
        <tissue>Testis</tissue>
    </source>
</reference>
<reference key="2">
    <citation type="journal article" date="2006" name="J. Proteome Res.">
        <title>Phosphoproteomic analysis of rat liver by high capacity IMAC and LC-MS/MS.</title>
        <authorList>
            <person name="Moser K."/>
            <person name="White F.M."/>
        </authorList>
    </citation>
    <scope>IDENTIFICATION BY MASS SPECTROMETRY [LARGE SCALE ANALYSIS]</scope>
</reference>
<reference key="3">
    <citation type="journal article" date="2012" name="Nat. Commun.">
        <title>Quantitative maps of protein phosphorylation sites across 14 different rat organs and tissues.</title>
        <authorList>
            <person name="Lundby A."/>
            <person name="Secher A."/>
            <person name="Lage K."/>
            <person name="Nordsborg N.B."/>
            <person name="Dmytriyev A."/>
            <person name="Lundby C."/>
            <person name="Olsen J.V."/>
        </authorList>
    </citation>
    <scope>PHOSPHORYLATION [LARGE SCALE ANALYSIS] AT SER-18 AND SER-167</scope>
    <scope>IDENTIFICATION BY MASS SPECTROMETRY [LARGE SCALE ANALYSIS]</scope>
</reference>
<evidence type="ECO:0000250" key="1"/>
<evidence type="ECO:0000250" key="2">
    <source>
        <dbReference type="UniProtKB" id="O75569"/>
    </source>
</evidence>
<evidence type="ECO:0000255" key="3">
    <source>
        <dbReference type="PROSITE-ProRule" id="PRU00266"/>
    </source>
</evidence>
<evidence type="ECO:0000256" key="4">
    <source>
        <dbReference type="SAM" id="MobiDB-lite"/>
    </source>
</evidence>
<evidence type="ECO:0000305" key="5"/>
<evidence type="ECO:0007744" key="6">
    <source>
    </source>
</evidence>